<dbReference type="EMBL" id="AABR07031849">
    <property type="status" value="NOT_ANNOTATED_CDS"/>
    <property type="molecule type" value="Genomic_DNA"/>
</dbReference>
<dbReference type="EMBL" id="CH473974">
    <property type="protein sequence ID" value="EDL76485.1"/>
    <property type="molecule type" value="Genomic_DNA"/>
</dbReference>
<dbReference type="RefSeq" id="NP_001102359.1">
    <property type="nucleotide sequence ID" value="NM_001108889.1"/>
</dbReference>
<dbReference type="SMR" id="D3ZTL1"/>
<dbReference type="FunCoup" id="D3ZTL1">
    <property type="interactions" value="20"/>
</dbReference>
<dbReference type="STRING" id="10116.ENSRNOP00000025465"/>
<dbReference type="PhosphoSitePlus" id="D3ZTL1"/>
<dbReference type="PaxDb" id="10116-ENSRNOP00000025465"/>
<dbReference type="Ensembl" id="ENSRNOT00000025465.5">
    <property type="protein sequence ID" value="ENSRNOP00000025465.4"/>
    <property type="gene ID" value="ENSRNOG00000018842.5"/>
</dbReference>
<dbReference type="GeneID" id="364855"/>
<dbReference type="KEGG" id="rno:364855"/>
<dbReference type="UCSC" id="RGD:1310459">
    <property type="organism name" value="rat"/>
</dbReference>
<dbReference type="AGR" id="RGD:1310459"/>
<dbReference type="CTD" id="5459"/>
<dbReference type="RGD" id="1310459">
    <property type="gene designation" value="Pou4f3"/>
</dbReference>
<dbReference type="eggNOG" id="KOG1168">
    <property type="taxonomic scope" value="Eukaryota"/>
</dbReference>
<dbReference type="GeneTree" id="ENSGT00940000160880"/>
<dbReference type="HOGENOM" id="CLU_013065_0_0_1"/>
<dbReference type="InParanoid" id="D3ZTL1"/>
<dbReference type="OMA" id="GMNAKQP"/>
<dbReference type="OrthoDB" id="6358449at2759"/>
<dbReference type="PhylomeDB" id="D3ZTL1"/>
<dbReference type="TreeFam" id="TF316413"/>
<dbReference type="PRO" id="PR:D3ZTL1"/>
<dbReference type="Proteomes" id="UP000002494">
    <property type="component" value="Chromosome 18"/>
</dbReference>
<dbReference type="Proteomes" id="UP000234681">
    <property type="component" value="Chromosome 18"/>
</dbReference>
<dbReference type="GO" id="GO:0005737">
    <property type="term" value="C:cytoplasm"/>
    <property type="evidence" value="ECO:0000250"/>
    <property type="project" value="UniProtKB"/>
</dbReference>
<dbReference type="GO" id="GO:0005654">
    <property type="term" value="C:nucleoplasm"/>
    <property type="evidence" value="ECO:0007669"/>
    <property type="project" value="Ensembl"/>
</dbReference>
<dbReference type="GO" id="GO:0005634">
    <property type="term" value="C:nucleus"/>
    <property type="evidence" value="ECO:0000250"/>
    <property type="project" value="UniProtKB"/>
</dbReference>
<dbReference type="GO" id="GO:0001228">
    <property type="term" value="F:DNA-binding transcription activator activity, RNA polymerase II-specific"/>
    <property type="evidence" value="ECO:0000266"/>
    <property type="project" value="RGD"/>
</dbReference>
<dbReference type="GO" id="GO:0003700">
    <property type="term" value="F:DNA-binding transcription factor activity"/>
    <property type="evidence" value="ECO:0000266"/>
    <property type="project" value="RGD"/>
</dbReference>
<dbReference type="GO" id="GO:0000981">
    <property type="term" value="F:DNA-binding transcription factor activity, RNA polymerase II-specific"/>
    <property type="evidence" value="ECO:0000318"/>
    <property type="project" value="GO_Central"/>
</dbReference>
<dbReference type="GO" id="GO:0000978">
    <property type="term" value="F:RNA polymerase II cis-regulatory region sequence-specific DNA binding"/>
    <property type="evidence" value="ECO:0000266"/>
    <property type="project" value="RGD"/>
</dbReference>
<dbReference type="GO" id="GO:0043565">
    <property type="term" value="F:sequence-specific DNA binding"/>
    <property type="evidence" value="ECO:0000250"/>
    <property type="project" value="UniProtKB"/>
</dbReference>
<dbReference type="GO" id="GO:1990837">
    <property type="term" value="F:sequence-specific double-stranded DNA binding"/>
    <property type="evidence" value="ECO:0000266"/>
    <property type="project" value="RGD"/>
</dbReference>
<dbReference type="GO" id="GO:0048675">
    <property type="term" value="P:axon extension"/>
    <property type="evidence" value="ECO:0000266"/>
    <property type="project" value="RGD"/>
</dbReference>
<dbReference type="GO" id="GO:0042491">
    <property type="term" value="P:inner ear auditory receptor cell differentiation"/>
    <property type="evidence" value="ECO:0000266"/>
    <property type="project" value="RGD"/>
</dbReference>
<dbReference type="GO" id="GO:0048839">
    <property type="term" value="P:inner ear development"/>
    <property type="evidence" value="ECO:0000266"/>
    <property type="project" value="RGD"/>
</dbReference>
<dbReference type="GO" id="GO:0042472">
    <property type="term" value="P:inner ear morphogenesis"/>
    <property type="evidence" value="ECO:0000266"/>
    <property type="project" value="RGD"/>
</dbReference>
<dbReference type="GO" id="GO:0060113">
    <property type="term" value="P:inner ear receptor cell differentiation"/>
    <property type="evidence" value="ECO:0000266"/>
    <property type="project" value="RGD"/>
</dbReference>
<dbReference type="GO" id="GO:0050885">
    <property type="term" value="P:neuromuscular process controlling balance"/>
    <property type="evidence" value="ECO:0000266"/>
    <property type="project" value="RGD"/>
</dbReference>
<dbReference type="GO" id="GO:0051402">
    <property type="term" value="P:neuron apoptotic process"/>
    <property type="evidence" value="ECO:0000266"/>
    <property type="project" value="RGD"/>
</dbReference>
<dbReference type="GO" id="GO:0045944">
    <property type="term" value="P:positive regulation of transcription by RNA polymerase II"/>
    <property type="evidence" value="ECO:0000266"/>
    <property type="project" value="RGD"/>
</dbReference>
<dbReference type="GO" id="GO:0006357">
    <property type="term" value="P:regulation of transcription by RNA polymerase II"/>
    <property type="evidence" value="ECO:0000266"/>
    <property type="project" value="RGD"/>
</dbReference>
<dbReference type="GO" id="GO:0031290">
    <property type="term" value="P:retinal ganglion cell axon guidance"/>
    <property type="evidence" value="ECO:0000266"/>
    <property type="project" value="RGD"/>
</dbReference>
<dbReference type="GO" id="GO:0007605">
    <property type="term" value="P:sensory perception of sound"/>
    <property type="evidence" value="ECO:0000266"/>
    <property type="project" value="RGD"/>
</dbReference>
<dbReference type="GO" id="GO:0021562">
    <property type="term" value="P:vestibulocochlear nerve development"/>
    <property type="evidence" value="ECO:0000266"/>
    <property type="project" value="RGD"/>
</dbReference>
<dbReference type="CDD" id="cd00086">
    <property type="entry name" value="homeodomain"/>
    <property type="match status" value="1"/>
</dbReference>
<dbReference type="FunFam" id="1.10.10.60:FF:000056">
    <property type="entry name" value="POU domain protein"/>
    <property type="match status" value="1"/>
</dbReference>
<dbReference type="FunFam" id="1.10.260.40:FF:000007">
    <property type="entry name" value="POU domain protein"/>
    <property type="match status" value="1"/>
</dbReference>
<dbReference type="Gene3D" id="1.10.10.60">
    <property type="entry name" value="Homeodomain-like"/>
    <property type="match status" value="1"/>
</dbReference>
<dbReference type="Gene3D" id="1.10.260.40">
    <property type="entry name" value="lambda repressor-like DNA-binding domains"/>
    <property type="match status" value="1"/>
</dbReference>
<dbReference type="InterPro" id="IPR001356">
    <property type="entry name" value="HD"/>
</dbReference>
<dbReference type="InterPro" id="IPR017970">
    <property type="entry name" value="Homeobox_CS"/>
</dbReference>
<dbReference type="InterPro" id="IPR009057">
    <property type="entry name" value="Homeodomain-like_sf"/>
</dbReference>
<dbReference type="InterPro" id="IPR010982">
    <property type="entry name" value="Lambda_DNA-bd_dom_sf"/>
</dbReference>
<dbReference type="InterPro" id="IPR013847">
    <property type="entry name" value="POU"/>
</dbReference>
<dbReference type="InterPro" id="IPR000327">
    <property type="entry name" value="POU_dom"/>
</dbReference>
<dbReference type="InterPro" id="IPR050255">
    <property type="entry name" value="POU_domain_TF"/>
</dbReference>
<dbReference type="PANTHER" id="PTHR11636">
    <property type="entry name" value="POU DOMAIN"/>
    <property type="match status" value="1"/>
</dbReference>
<dbReference type="PANTHER" id="PTHR11636:SF43">
    <property type="entry name" value="POU DOMAIN, CLASS 4, TRANSCRIPTION FACTOR 3"/>
    <property type="match status" value="1"/>
</dbReference>
<dbReference type="Pfam" id="PF00046">
    <property type="entry name" value="Homeodomain"/>
    <property type="match status" value="1"/>
</dbReference>
<dbReference type="Pfam" id="PF00157">
    <property type="entry name" value="Pou"/>
    <property type="match status" value="1"/>
</dbReference>
<dbReference type="PRINTS" id="PR00028">
    <property type="entry name" value="POUDOMAIN"/>
</dbReference>
<dbReference type="SMART" id="SM00389">
    <property type="entry name" value="HOX"/>
    <property type="match status" value="1"/>
</dbReference>
<dbReference type="SMART" id="SM00352">
    <property type="entry name" value="POU"/>
    <property type="match status" value="1"/>
</dbReference>
<dbReference type="SUPFAM" id="SSF46689">
    <property type="entry name" value="Homeodomain-like"/>
    <property type="match status" value="1"/>
</dbReference>
<dbReference type="SUPFAM" id="SSF47413">
    <property type="entry name" value="lambda repressor-like DNA-binding domains"/>
    <property type="match status" value="1"/>
</dbReference>
<dbReference type="PROSITE" id="PS00027">
    <property type="entry name" value="HOMEOBOX_1"/>
    <property type="match status" value="1"/>
</dbReference>
<dbReference type="PROSITE" id="PS50071">
    <property type="entry name" value="HOMEOBOX_2"/>
    <property type="match status" value="1"/>
</dbReference>
<dbReference type="PROSITE" id="PS00035">
    <property type="entry name" value="POU_1"/>
    <property type="match status" value="1"/>
</dbReference>
<dbReference type="PROSITE" id="PS00465">
    <property type="entry name" value="POU_2"/>
    <property type="match status" value="1"/>
</dbReference>
<dbReference type="PROSITE" id="PS51179">
    <property type="entry name" value="POU_3"/>
    <property type="match status" value="1"/>
</dbReference>
<keyword id="KW-0010">Activator</keyword>
<keyword id="KW-0963">Cytoplasm</keyword>
<keyword id="KW-0221">Differentiation</keyword>
<keyword id="KW-0238">DNA-binding</keyword>
<keyword id="KW-0371">Homeobox</keyword>
<keyword id="KW-0539">Nucleus</keyword>
<keyword id="KW-1185">Reference proteome</keyword>
<keyword id="KW-0804">Transcription</keyword>
<keyword id="KW-0805">Transcription regulation</keyword>
<reference key="1">
    <citation type="journal article" date="2004" name="Nature">
        <title>Genome sequence of the Brown Norway rat yields insights into mammalian evolution.</title>
        <authorList>
            <person name="Gibbs R.A."/>
            <person name="Weinstock G.M."/>
            <person name="Metzker M.L."/>
            <person name="Muzny D.M."/>
            <person name="Sodergren E.J."/>
            <person name="Scherer S."/>
            <person name="Scott G."/>
            <person name="Steffen D."/>
            <person name="Worley K.C."/>
            <person name="Burch P.E."/>
            <person name="Okwuonu G."/>
            <person name="Hines S."/>
            <person name="Lewis L."/>
            <person name="Deramo C."/>
            <person name="Delgado O."/>
            <person name="Dugan-Rocha S."/>
            <person name="Miner G."/>
            <person name="Morgan M."/>
            <person name="Hawes A."/>
            <person name="Gill R."/>
            <person name="Holt R.A."/>
            <person name="Adams M.D."/>
            <person name="Amanatides P.G."/>
            <person name="Baden-Tillson H."/>
            <person name="Barnstead M."/>
            <person name="Chin S."/>
            <person name="Evans C.A."/>
            <person name="Ferriera S."/>
            <person name="Fosler C."/>
            <person name="Glodek A."/>
            <person name="Gu Z."/>
            <person name="Jennings D."/>
            <person name="Kraft C.L."/>
            <person name="Nguyen T."/>
            <person name="Pfannkoch C.M."/>
            <person name="Sitter C."/>
            <person name="Sutton G.G."/>
            <person name="Venter J.C."/>
            <person name="Woodage T."/>
            <person name="Smith D."/>
            <person name="Lee H.-M."/>
            <person name="Gustafson E."/>
            <person name="Cahill P."/>
            <person name="Kana A."/>
            <person name="Doucette-Stamm L."/>
            <person name="Weinstock K."/>
            <person name="Fechtel K."/>
            <person name="Weiss R.B."/>
            <person name="Dunn D.M."/>
            <person name="Green E.D."/>
            <person name="Blakesley R.W."/>
            <person name="Bouffard G.G."/>
            <person name="De Jong P.J."/>
            <person name="Osoegawa K."/>
            <person name="Zhu B."/>
            <person name="Marra M."/>
            <person name="Schein J."/>
            <person name="Bosdet I."/>
            <person name="Fjell C."/>
            <person name="Jones S."/>
            <person name="Krzywinski M."/>
            <person name="Mathewson C."/>
            <person name="Siddiqui A."/>
            <person name="Wye N."/>
            <person name="McPherson J."/>
            <person name="Zhao S."/>
            <person name="Fraser C.M."/>
            <person name="Shetty J."/>
            <person name="Shatsman S."/>
            <person name="Geer K."/>
            <person name="Chen Y."/>
            <person name="Abramzon S."/>
            <person name="Nierman W.C."/>
            <person name="Havlak P.H."/>
            <person name="Chen R."/>
            <person name="Durbin K.J."/>
            <person name="Egan A."/>
            <person name="Ren Y."/>
            <person name="Song X.-Z."/>
            <person name="Li B."/>
            <person name="Liu Y."/>
            <person name="Qin X."/>
            <person name="Cawley S."/>
            <person name="Cooney A.J."/>
            <person name="D'Souza L.M."/>
            <person name="Martin K."/>
            <person name="Wu J.Q."/>
            <person name="Gonzalez-Garay M.L."/>
            <person name="Jackson A.R."/>
            <person name="Kalafus K.J."/>
            <person name="McLeod M.P."/>
            <person name="Milosavljevic A."/>
            <person name="Virk D."/>
            <person name="Volkov A."/>
            <person name="Wheeler D.A."/>
            <person name="Zhang Z."/>
            <person name="Bailey J.A."/>
            <person name="Eichler E.E."/>
            <person name="Tuzun E."/>
            <person name="Birney E."/>
            <person name="Mongin E."/>
            <person name="Ureta-Vidal A."/>
            <person name="Woodwark C."/>
            <person name="Zdobnov E."/>
            <person name="Bork P."/>
            <person name="Suyama M."/>
            <person name="Torrents D."/>
            <person name="Alexandersson M."/>
            <person name="Trask B.J."/>
            <person name="Young J.M."/>
            <person name="Huang H."/>
            <person name="Wang H."/>
            <person name="Xing H."/>
            <person name="Daniels S."/>
            <person name="Gietzen D."/>
            <person name="Schmidt J."/>
            <person name="Stevens K."/>
            <person name="Vitt U."/>
            <person name="Wingrove J."/>
            <person name="Camara F."/>
            <person name="Mar Alba M."/>
            <person name="Abril J.F."/>
            <person name="Guigo R."/>
            <person name="Smit A."/>
            <person name="Dubchak I."/>
            <person name="Rubin E.M."/>
            <person name="Couronne O."/>
            <person name="Poliakov A."/>
            <person name="Huebner N."/>
            <person name="Ganten D."/>
            <person name="Goesele C."/>
            <person name="Hummel O."/>
            <person name="Kreitler T."/>
            <person name="Lee Y.-A."/>
            <person name="Monti J."/>
            <person name="Schulz H."/>
            <person name="Zimdahl H."/>
            <person name="Himmelbauer H."/>
            <person name="Lehrach H."/>
            <person name="Jacob H.J."/>
            <person name="Bromberg S."/>
            <person name="Gullings-Handley J."/>
            <person name="Jensen-Seaman M.I."/>
            <person name="Kwitek A.E."/>
            <person name="Lazar J."/>
            <person name="Pasko D."/>
            <person name="Tonellato P.J."/>
            <person name="Twigger S."/>
            <person name="Ponting C.P."/>
            <person name="Duarte J.M."/>
            <person name="Rice S."/>
            <person name="Goodstadt L."/>
            <person name="Beatson S.A."/>
            <person name="Emes R.D."/>
            <person name="Winter E.E."/>
            <person name="Webber C."/>
            <person name="Brandt P."/>
            <person name="Nyakatura G."/>
            <person name="Adetobi M."/>
            <person name="Chiaromonte F."/>
            <person name="Elnitski L."/>
            <person name="Eswara P."/>
            <person name="Hardison R.C."/>
            <person name="Hou M."/>
            <person name="Kolbe D."/>
            <person name="Makova K."/>
            <person name="Miller W."/>
            <person name="Nekrutenko A."/>
            <person name="Riemer C."/>
            <person name="Schwartz S."/>
            <person name="Taylor J."/>
            <person name="Yang S."/>
            <person name="Zhang Y."/>
            <person name="Lindpaintner K."/>
            <person name="Andrews T.D."/>
            <person name="Caccamo M."/>
            <person name="Clamp M."/>
            <person name="Clarke L."/>
            <person name="Curwen V."/>
            <person name="Durbin R.M."/>
            <person name="Eyras E."/>
            <person name="Searle S.M."/>
            <person name="Cooper G.M."/>
            <person name="Batzoglou S."/>
            <person name="Brudno M."/>
            <person name="Sidow A."/>
            <person name="Stone E.A."/>
            <person name="Payseur B.A."/>
            <person name="Bourque G."/>
            <person name="Lopez-Otin C."/>
            <person name="Puente X.S."/>
            <person name="Chakrabarti K."/>
            <person name="Chatterji S."/>
            <person name="Dewey C."/>
            <person name="Pachter L."/>
            <person name="Bray N."/>
            <person name="Yap V.B."/>
            <person name="Caspi A."/>
            <person name="Tesler G."/>
            <person name="Pevzner P.A."/>
            <person name="Haussler D."/>
            <person name="Roskin K.M."/>
            <person name="Baertsch R."/>
            <person name="Clawson H."/>
            <person name="Furey T.S."/>
            <person name="Hinrichs A.S."/>
            <person name="Karolchik D."/>
            <person name="Kent W.J."/>
            <person name="Rosenbloom K.R."/>
            <person name="Trumbower H."/>
            <person name="Weirauch M."/>
            <person name="Cooper D.N."/>
            <person name="Stenson P.D."/>
            <person name="Ma B."/>
            <person name="Brent M."/>
            <person name="Arumugam M."/>
            <person name="Shteynberg D."/>
            <person name="Copley R.R."/>
            <person name="Taylor M.S."/>
            <person name="Riethman H."/>
            <person name="Mudunuri U."/>
            <person name="Peterson J."/>
            <person name="Guyer M."/>
            <person name="Felsenfeld A."/>
            <person name="Old S."/>
            <person name="Mockrin S."/>
            <person name="Collins F.S."/>
        </authorList>
    </citation>
    <scope>NUCLEOTIDE SEQUENCE [LARGE SCALE GENOMIC DNA]</scope>
    <source>
        <strain>Brown Norway</strain>
    </source>
</reference>
<reference key="2">
    <citation type="submission" date="2005-07" db="EMBL/GenBank/DDBJ databases">
        <authorList>
            <person name="Mural R.J."/>
            <person name="Adams M.D."/>
            <person name="Myers E.W."/>
            <person name="Smith H.O."/>
            <person name="Venter J.C."/>
        </authorList>
    </citation>
    <scope>NUCLEOTIDE SEQUENCE [LARGE SCALE GENOMIC DNA]</scope>
</reference>
<reference key="3">
    <citation type="journal article" date="1996" name="Nature">
        <title>Role of transcription factors Brn-3.1 and Brn-3.2 in auditory and visual system development.</title>
        <authorList>
            <person name="Erkman L."/>
            <person name="McEvilly R.J."/>
            <person name="Luo L."/>
            <person name="Ryan A.K."/>
            <person name="Hooshmand F."/>
            <person name="O'Connell S.M."/>
            <person name="Keithley E.M."/>
            <person name="Rapaport D.H."/>
            <person name="Ryan A.F."/>
            <person name="Rosenfeld M.G."/>
        </authorList>
    </citation>
    <scope>DEVELOPMENTAL STAGE</scope>
    <scope>TISSUE SPECIFICITY</scope>
</reference>
<feature type="chain" id="PRO_0000438270" description="POU domain, class 4, transcription factor 3">
    <location>
        <begin position="1"/>
        <end position="338"/>
    </location>
</feature>
<feature type="domain" description="POU-specific" evidence="5">
    <location>
        <begin position="179"/>
        <end position="256"/>
    </location>
</feature>
<feature type="DNA-binding region" description="Homeobox" evidence="4">
    <location>
        <begin position="274"/>
        <end position="333"/>
    </location>
</feature>
<feature type="region of interest" description="Disordered" evidence="7">
    <location>
        <begin position="91"/>
        <end position="112"/>
    </location>
</feature>
<feature type="short sequence motif" description="POU-IV box" evidence="1">
    <location>
        <begin position="56"/>
        <end position="65"/>
    </location>
</feature>
<sequence length="338" mass="37043">MMAMNAKQPFGMHPVLQEPKFSSLHSGSEAMRRVCLPAPQLQGNIFGSFDESLLARAEALAAVDIVSHGKNHPFKPDATYHTMSSVPCTSTSPTVPISHPAALTSHPHHPVHQGLEGDLLEHISPTLSVSGLGAPEHSVMPAQIHPHHLGAMGHLHQAMGMSHPHAVAPHSAMPACLSDVESDPRELEAFAERFKQRRIKLGVTQADVGAALANLKIPGVGSLSQSTICRFESLTLSHNNMIALKPVLQAWLEEAEAAYREKNSKPELFNGSERKRKRTSIAAPEKRSLEAYFAIQPRPSSEKIAAIAEKLDLKKNVVRVWFCNQRQKQKRMKYSAVH</sequence>
<accession>D3ZTL1</accession>
<organism>
    <name type="scientific">Rattus norvegicus</name>
    <name type="common">Rat</name>
    <dbReference type="NCBI Taxonomy" id="10116"/>
    <lineage>
        <taxon>Eukaryota</taxon>
        <taxon>Metazoa</taxon>
        <taxon>Chordata</taxon>
        <taxon>Craniata</taxon>
        <taxon>Vertebrata</taxon>
        <taxon>Euteleostomi</taxon>
        <taxon>Mammalia</taxon>
        <taxon>Eutheria</taxon>
        <taxon>Euarchontoglires</taxon>
        <taxon>Glires</taxon>
        <taxon>Rodentia</taxon>
        <taxon>Myomorpha</taxon>
        <taxon>Muroidea</taxon>
        <taxon>Muridae</taxon>
        <taxon>Murinae</taxon>
        <taxon>Rattus</taxon>
    </lineage>
</organism>
<gene>
    <name evidence="9" type="primary">Pou4f3</name>
</gene>
<evidence type="ECO:0000250" key="1">
    <source>
        <dbReference type="UniProtKB" id="Q15319"/>
    </source>
</evidence>
<evidence type="ECO:0000250" key="2">
    <source>
        <dbReference type="UniProtKB" id="Q63955"/>
    </source>
</evidence>
<evidence type="ECO:0000255" key="3"/>
<evidence type="ECO:0000255" key="4">
    <source>
        <dbReference type="PROSITE-ProRule" id="PRU00108"/>
    </source>
</evidence>
<evidence type="ECO:0000255" key="5">
    <source>
        <dbReference type="PROSITE-ProRule" id="PRU00530"/>
    </source>
</evidence>
<evidence type="ECO:0000255" key="6">
    <source>
        <dbReference type="RuleBase" id="RU361194"/>
    </source>
</evidence>
<evidence type="ECO:0000256" key="7">
    <source>
        <dbReference type="SAM" id="MobiDB-lite"/>
    </source>
</evidence>
<evidence type="ECO:0000269" key="8">
    <source>
    </source>
</evidence>
<evidence type="ECO:0000312" key="9">
    <source>
        <dbReference type="RGD" id="1310459"/>
    </source>
</evidence>
<protein>
    <recommendedName>
        <fullName>POU domain, class 4, transcription factor 3</fullName>
    </recommendedName>
</protein>
<comment type="function">
    <text evidence="2">Acts as a transcriptional activator. Acts by binding to sequences related to the consensus octamer motif 5'-ATGCAAAT-3' in the regulatory regions of its target genes. Involved in the auditory system development, required for terminal differentiation of hair cells in the inner ear.</text>
</comment>
<comment type="subunit">
    <text evidence="2">Interacts with ISL1.</text>
</comment>
<comment type="subcellular location">
    <subcellularLocation>
        <location evidence="1">Nucleus</location>
    </subcellularLocation>
    <subcellularLocation>
        <location evidence="1">Cytoplasm</location>
    </subcellularLocation>
    <text evidence="1">Preferentially localized in the nucleus.</text>
</comment>
<comment type="tissue specificity">
    <text evidence="8">Expressed in the chochlea of the inner ear.</text>
</comment>
<comment type="developmental stage">
    <text evidence="8">At 14 dpc, strongly expressed in cochlear and vestibular hair cells of the inner ear, in the cochlea at 18 dpc and coninues to the adulthood.</text>
</comment>
<comment type="similarity">
    <text evidence="3 6">Belongs to the POU transcription factor family.</text>
</comment>
<name>PO4F3_RAT</name>
<proteinExistence type="evidence at transcript level"/>